<feature type="chain" id="PRO_0000376794" description="N-acetyldiaminopimelate deacetylase">
    <location>
        <begin position="1"/>
        <end position="377"/>
    </location>
</feature>
<feature type="active site" evidence="1">
    <location>
        <position position="70"/>
    </location>
</feature>
<feature type="active site" description="Proton acceptor" evidence="1">
    <location>
        <position position="129"/>
    </location>
</feature>
<comment type="function">
    <text evidence="1">Catalyzes the conversion of N-acetyl-diaminopimelate to diaminopimelate and acetate.</text>
</comment>
<comment type="catalytic activity">
    <reaction evidence="1">
        <text>N-acetyl-(2S,6S)-2,6-diaminopimelate + H2O = (2S,6S)-2,6-diaminopimelate + acetate</text>
        <dbReference type="Rhea" id="RHEA:20405"/>
        <dbReference type="ChEBI" id="CHEBI:15377"/>
        <dbReference type="ChEBI" id="CHEBI:30089"/>
        <dbReference type="ChEBI" id="CHEBI:57609"/>
        <dbReference type="ChEBI" id="CHEBI:58767"/>
        <dbReference type="EC" id="3.5.1.47"/>
    </reaction>
</comment>
<comment type="pathway">
    <text evidence="1">Amino-acid biosynthesis; L-lysine biosynthesis via DAP pathway; LL-2,6-diaminopimelate from (S)-tetrahydrodipicolinate (acetylase route): step 3/3.</text>
</comment>
<comment type="similarity">
    <text evidence="1">Belongs to the peptidase M20A family. N-acetyldiaminopimelate deacetylase subfamily.</text>
</comment>
<organism>
    <name type="scientific">Streptococcus thermophilus (strain CNRZ 1066)</name>
    <dbReference type="NCBI Taxonomy" id="299768"/>
    <lineage>
        <taxon>Bacteria</taxon>
        <taxon>Bacillati</taxon>
        <taxon>Bacillota</taxon>
        <taxon>Bacilli</taxon>
        <taxon>Lactobacillales</taxon>
        <taxon>Streptococcaceae</taxon>
        <taxon>Streptococcus</taxon>
    </lineage>
</organism>
<gene>
    <name type="ordered locus">str1838</name>
</gene>
<accession>Q5LXY3</accession>
<reference key="1">
    <citation type="journal article" date="2004" name="Nat. Biotechnol.">
        <title>Complete sequence and comparative genome analysis of the dairy bacterium Streptococcus thermophilus.</title>
        <authorList>
            <person name="Bolotin A."/>
            <person name="Quinquis B."/>
            <person name="Renault P."/>
            <person name="Sorokin A."/>
            <person name="Ehrlich S.D."/>
            <person name="Kulakauskas S."/>
            <person name="Lapidus A."/>
            <person name="Goltsman E."/>
            <person name="Mazur M."/>
            <person name="Pusch G.D."/>
            <person name="Fonstein M."/>
            <person name="Overbeek R."/>
            <person name="Kyprides N."/>
            <person name="Purnelle B."/>
            <person name="Prozzi D."/>
            <person name="Ngui K."/>
            <person name="Masuy D."/>
            <person name="Hancy F."/>
            <person name="Burteau S."/>
            <person name="Boutry M."/>
            <person name="Delcour J."/>
            <person name="Goffeau A."/>
            <person name="Hols P."/>
        </authorList>
    </citation>
    <scope>NUCLEOTIDE SEQUENCE [LARGE SCALE GENOMIC DNA]</scope>
    <source>
        <strain>CNRZ 1066</strain>
    </source>
</reference>
<protein>
    <recommendedName>
        <fullName evidence="1">N-acetyldiaminopimelate deacetylase</fullName>
        <ecNumber evidence="1">3.5.1.47</ecNumber>
    </recommendedName>
</protein>
<dbReference type="EC" id="3.5.1.47" evidence="1"/>
<dbReference type="EMBL" id="CP000024">
    <property type="protein sequence ID" value="AAV63352.1"/>
    <property type="molecule type" value="Genomic_DNA"/>
</dbReference>
<dbReference type="RefSeq" id="WP_002951995.1">
    <property type="nucleotide sequence ID" value="NC_006449.1"/>
</dbReference>
<dbReference type="SMR" id="Q5LXY3"/>
<dbReference type="KEGG" id="stc:str1838"/>
<dbReference type="HOGENOM" id="CLU_023257_0_1_9"/>
<dbReference type="UniPathway" id="UPA00034">
    <property type="reaction ID" value="UER00024"/>
</dbReference>
<dbReference type="GO" id="GO:0050118">
    <property type="term" value="F:N-acetyldiaminopimelate deacetylase activity"/>
    <property type="evidence" value="ECO:0007669"/>
    <property type="project" value="UniProtKB-UniRule"/>
</dbReference>
<dbReference type="GO" id="GO:0019877">
    <property type="term" value="P:diaminopimelate biosynthetic process"/>
    <property type="evidence" value="ECO:0007669"/>
    <property type="project" value="UniProtKB-UniRule"/>
</dbReference>
<dbReference type="GO" id="GO:0009089">
    <property type="term" value="P:lysine biosynthetic process via diaminopimelate"/>
    <property type="evidence" value="ECO:0007669"/>
    <property type="project" value="UniProtKB-UniRule"/>
</dbReference>
<dbReference type="CDD" id="cd05670">
    <property type="entry name" value="M20_Acy1_YkuR-like"/>
    <property type="match status" value="1"/>
</dbReference>
<dbReference type="FunFam" id="3.30.70.360:FF:000001">
    <property type="entry name" value="N-acetyldiaminopimelate deacetylase"/>
    <property type="match status" value="1"/>
</dbReference>
<dbReference type="Gene3D" id="3.30.70.360">
    <property type="match status" value="1"/>
</dbReference>
<dbReference type="Gene3D" id="3.40.630.10">
    <property type="entry name" value="Zn peptidases"/>
    <property type="match status" value="1"/>
</dbReference>
<dbReference type="HAMAP" id="MF_01692">
    <property type="entry name" value="DapEL"/>
    <property type="match status" value="1"/>
</dbReference>
<dbReference type="InterPro" id="IPR023905">
    <property type="entry name" value="AcetylDAP_deacetylase"/>
</dbReference>
<dbReference type="InterPro" id="IPR017439">
    <property type="entry name" value="Amidohydrolase"/>
</dbReference>
<dbReference type="InterPro" id="IPR036264">
    <property type="entry name" value="Bact_exopeptidase_dim_dom"/>
</dbReference>
<dbReference type="InterPro" id="IPR002933">
    <property type="entry name" value="Peptidase_M20"/>
</dbReference>
<dbReference type="InterPro" id="IPR011650">
    <property type="entry name" value="Peptidase_M20_dimer"/>
</dbReference>
<dbReference type="NCBIfam" id="TIGR01891">
    <property type="entry name" value="amidohydrolases"/>
    <property type="match status" value="1"/>
</dbReference>
<dbReference type="PANTHER" id="PTHR11014:SF98">
    <property type="entry name" value="N-ACETYLDIAMINOPIMELATE DEACETYLASE"/>
    <property type="match status" value="1"/>
</dbReference>
<dbReference type="PANTHER" id="PTHR11014">
    <property type="entry name" value="PEPTIDASE M20 FAMILY MEMBER"/>
    <property type="match status" value="1"/>
</dbReference>
<dbReference type="Pfam" id="PF07687">
    <property type="entry name" value="M20_dimer"/>
    <property type="match status" value="1"/>
</dbReference>
<dbReference type="Pfam" id="PF01546">
    <property type="entry name" value="Peptidase_M20"/>
    <property type="match status" value="1"/>
</dbReference>
<dbReference type="PIRSF" id="PIRSF005962">
    <property type="entry name" value="Pept_M20D_amidohydro"/>
    <property type="match status" value="1"/>
</dbReference>
<dbReference type="SUPFAM" id="SSF55031">
    <property type="entry name" value="Bacterial exopeptidase dimerisation domain"/>
    <property type="match status" value="1"/>
</dbReference>
<dbReference type="SUPFAM" id="SSF53187">
    <property type="entry name" value="Zn-dependent exopeptidases"/>
    <property type="match status" value="1"/>
</dbReference>
<evidence type="ECO:0000255" key="1">
    <source>
        <dbReference type="HAMAP-Rule" id="MF_01692"/>
    </source>
</evidence>
<name>DAPEL_STRT1</name>
<sequence>MTLDLIKIRRDLHQIPEIGLEEFKTQAYLLERIAEMTEGKDFVEQRTWRTGILVFLHGSAPEKTIGWRTDIDGLPIVEETGLDFKSIHEGRMHACGHDIHMTTALGLLDQMLQVQPKNNMLFLFQPAEENEAGGMLMYEDGAFGDWLPDEFYGLHVRPDFKVGDIATNTNTLFAGTCEVLVTFKGKGGHAAFPHEANDALVAASYFITQVQTIVSRNVDPIQGGVVTFGSFHAGTTNNVIAETAEVYGTIRTLTQEMSLLIQKRVRQIAEGVAASFGMEVDIMLKQGGYLPVENNPALAKELMAFFDASPAVNLIDCLPAMTGEDFGYLLSKVPGVMFWLGIDTPYALHHPKMSPNEEALAFAVSEIGKFLKYKAED</sequence>
<proteinExistence type="inferred from homology"/>
<keyword id="KW-0028">Amino-acid biosynthesis</keyword>
<keyword id="KW-0220">Diaminopimelate biosynthesis</keyword>
<keyword id="KW-0378">Hydrolase</keyword>
<keyword id="KW-0457">Lysine biosynthesis</keyword>